<reference key="1">
    <citation type="journal article" date="1996" name="Genomics">
        <title>Transcripts from a novel human KRAB zinc finger gene contain spliced Alu and endogenous retroviral segments.</title>
        <authorList>
            <person name="Baban S."/>
            <person name="Freeman J.D."/>
            <person name="Mager D.L."/>
        </authorList>
    </citation>
    <scope>NUCLEOTIDE SEQUENCE [MRNA] (ISOFORM 2)</scope>
    <scope>VARIANTS MET-112 AND PHE-455</scope>
</reference>
<reference key="2">
    <citation type="journal article" date="2001" name="Genomics">
        <title>Repetitive elements in the 5' untranslated region of a human zinc-finger gene modulate transcription and translation efficiency.</title>
        <authorList>
            <person name="Landry J.R."/>
            <person name="Medstrand P."/>
            <person name="Mager D.L."/>
        </authorList>
    </citation>
    <scope>NUCLEOTIDE SEQUENCE [MRNA] (ISOFORM 3)</scope>
    <scope>VARIANT MET-112</scope>
</reference>
<reference key="3">
    <citation type="journal article" date="2004" name="Nat. Genet.">
        <title>Complete sequencing and characterization of 21,243 full-length human cDNAs.</title>
        <authorList>
            <person name="Ota T."/>
            <person name="Suzuki Y."/>
            <person name="Nishikawa T."/>
            <person name="Otsuki T."/>
            <person name="Sugiyama T."/>
            <person name="Irie R."/>
            <person name="Wakamatsu A."/>
            <person name="Hayashi K."/>
            <person name="Sato H."/>
            <person name="Nagai K."/>
            <person name="Kimura K."/>
            <person name="Makita H."/>
            <person name="Sekine M."/>
            <person name="Obayashi M."/>
            <person name="Nishi T."/>
            <person name="Shibahara T."/>
            <person name="Tanaka T."/>
            <person name="Ishii S."/>
            <person name="Yamamoto J."/>
            <person name="Saito K."/>
            <person name="Kawai Y."/>
            <person name="Isono Y."/>
            <person name="Nakamura Y."/>
            <person name="Nagahari K."/>
            <person name="Murakami K."/>
            <person name="Yasuda T."/>
            <person name="Iwayanagi T."/>
            <person name="Wagatsuma M."/>
            <person name="Shiratori A."/>
            <person name="Sudo H."/>
            <person name="Hosoiri T."/>
            <person name="Kaku Y."/>
            <person name="Kodaira H."/>
            <person name="Kondo H."/>
            <person name="Sugawara M."/>
            <person name="Takahashi M."/>
            <person name="Kanda K."/>
            <person name="Yokoi T."/>
            <person name="Furuya T."/>
            <person name="Kikkawa E."/>
            <person name="Omura Y."/>
            <person name="Abe K."/>
            <person name="Kamihara K."/>
            <person name="Katsuta N."/>
            <person name="Sato K."/>
            <person name="Tanikawa M."/>
            <person name="Yamazaki M."/>
            <person name="Ninomiya K."/>
            <person name="Ishibashi T."/>
            <person name="Yamashita H."/>
            <person name="Murakawa K."/>
            <person name="Fujimori K."/>
            <person name="Tanai H."/>
            <person name="Kimata M."/>
            <person name="Watanabe M."/>
            <person name="Hiraoka S."/>
            <person name="Chiba Y."/>
            <person name="Ishida S."/>
            <person name="Ono Y."/>
            <person name="Takiguchi S."/>
            <person name="Watanabe S."/>
            <person name="Yosida M."/>
            <person name="Hotuta T."/>
            <person name="Kusano J."/>
            <person name="Kanehori K."/>
            <person name="Takahashi-Fujii A."/>
            <person name="Hara H."/>
            <person name="Tanase T.-O."/>
            <person name="Nomura Y."/>
            <person name="Togiya S."/>
            <person name="Komai F."/>
            <person name="Hara R."/>
            <person name="Takeuchi K."/>
            <person name="Arita M."/>
            <person name="Imose N."/>
            <person name="Musashino K."/>
            <person name="Yuuki H."/>
            <person name="Oshima A."/>
            <person name="Sasaki N."/>
            <person name="Aotsuka S."/>
            <person name="Yoshikawa Y."/>
            <person name="Matsunawa H."/>
            <person name="Ichihara T."/>
            <person name="Shiohata N."/>
            <person name="Sano S."/>
            <person name="Moriya S."/>
            <person name="Momiyama H."/>
            <person name="Satoh N."/>
            <person name="Takami S."/>
            <person name="Terashima Y."/>
            <person name="Suzuki O."/>
            <person name="Nakagawa S."/>
            <person name="Senoh A."/>
            <person name="Mizoguchi H."/>
            <person name="Goto Y."/>
            <person name="Shimizu F."/>
            <person name="Wakebe H."/>
            <person name="Hishigaki H."/>
            <person name="Watanabe T."/>
            <person name="Sugiyama A."/>
            <person name="Takemoto M."/>
            <person name="Kawakami B."/>
            <person name="Yamazaki M."/>
            <person name="Watanabe K."/>
            <person name="Kumagai A."/>
            <person name="Itakura S."/>
            <person name="Fukuzumi Y."/>
            <person name="Fujimori Y."/>
            <person name="Komiyama M."/>
            <person name="Tashiro H."/>
            <person name="Tanigami A."/>
            <person name="Fujiwara T."/>
            <person name="Ono T."/>
            <person name="Yamada K."/>
            <person name="Fujii Y."/>
            <person name="Ozaki K."/>
            <person name="Hirao M."/>
            <person name="Ohmori Y."/>
            <person name="Kawabata A."/>
            <person name="Hikiji T."/>
            <person name="Kobatake N."/>
            <person name="Inagaki H."/>
            <person name="Ikema Y."/>
            <person name="Okamoto S."/>
            <person name="Okitani R."/>
            <person name="Kawakami T."/>
            <person name="Noguchi S."/>
            <person name="Itoh T."/>
            <person name="Shigeta K."/>
            <person name="Senba T."/>
            <person name="Matsumura K."/>
            <person name="Nakajima Y."/>
            <person name="Mizuno T."/>
            <person name="Morinaga M."/>
            <person name="Sasaki M."/>
            <person name="Togashi T."/>
            <person name="Oyama M."/>
            <person name="Hata H."/>
            <person name="Watanabe M."/>
            <person name="Komatsu T."/>
            <person name="Mizushima-Sugano J."/>
            <person name="Satoh T."/>
            <person name="Shirai Y."/>
            <person name="Takahashi Y."/>
            <person name="Nakagawa K."/>
            <person name="Okumura K."/>
            <person name="Nagase T."/>
            <person name="Nomura N."/>
            <person name="Kikuchi H."/>
            <person name="Masuho Y."/>
            <person name="Yamashita R."/>
            <person name="Nakai K."/>
            <person name="Yada T."/>
            <person name="Nakamura Y."/>
            <person name="Ohara O."/>
            <person name="Isogai T."/>
            <person name="Sugano S."/>
        </authorList>
    </citation>
    <scope>NUCLEOTIDE SEQUENCE [LARGE SCALE MRNA] (ISOFORM 1)</scope>
    <scope>VARIANTS MET-112 AND PHE-455</scope>
    <source>
        <tissue>Testis</tissue>
    </source>
</reference>
<reference key="4">
    <citation type="journal article" date="2004" name="Nature">
        <title>The DNA sequence and biology of human chromosome 19.</title>
        <authorList>
            <person name="Grimwood J."/>
            <person name="Gordon L.A."/>
            <person name="Olsen A.S."/>
            <person name="Terry A."/>
            <person name="Schmutz J."/>
            <person name="Lamerdin J.E."/>
            <person name="Hellsten U."/>
            <person name="Goodstein D."/>
            <person name="Couronne O."/>
            <person name="Tran-Gyamfi M."/>
            <person name="Aerts A."/>
            <person name="Altherr M."/>
            <person name="Ashworth L."/>
            <person name="Bajorek E."/>
            <person name="Black S."/>
            <person name="Branscomb E."/>
            <person name="Caenepeel S."/>
            <person name="Carrano A.V."/>
            <person name="Caoile C."/>
            <person name="Chan Y.M."/>
            <person name="Christensen M."/>
            <person name="Cleland C.A."/>
            <person name="Copeland A."/>
            <person name="Dalin E."/>
            <person name="Dehal P."/>
            <person name="Denys M."/>
            <person name="Detter J.C."/>
            <person name="Escobar J."/>
            <person name="Flowers D."/>
            <person name="Fotopulos D."/>
            <person name="Garcia C."/>
            <person name="Georgescu A.M."/>
            <person name="Glavina T."/>
            <person name="Gomez M."/>
            <person name="Gonzales E."/>
            <person name="Groza M."/>
            <person name="Hammon N."/>
            <person name="Hawkins T."/>
            <person name="Haydu L."/>
            <person name="Ho I."/>
            <person name="Huang W."/>
            <person name="Israni S."/>
            <person name="Jett J."/>
            <person name="Kadner K."/>
            <person name="Kimball H."/>
            <person name="Kobayashi A."/>
            <person name="Larionov V."/>
            <person name="Leem S.-H."/>
            <person name="Lopez F."/>
            <person name="Lou Y."/>
            <person name="Lowry S."/>
            <person name="Malfatti S."/>
            <person name="Martinez D."/>
            <person name="McCready P.M."/>
            <person name="Medina C."/>
            <person name="Morgan J."/>
            <person name="Nelson K."/>
            <person name="Nolan M."/>
            <person name="Ovcharenko I."/>
            <person name="Pitluck S."/>
            <person name="Pollard M."/>
            <person name="Popkie A.P."/>
            <person name="Predki P."/>
            <person name="Quan G."/>
            <person name="Ramirez L."/>
            <person name="Rash S."/>
            <person name="Retterer J."/>
            <person name="Rodriguez A."/>
            <person name="Rogers S."/>
            <person name="Salamov A."/>
            <person name="Salazar A."/>
            <person name="She X."/>
            <person name="Smith D."/>
            <person name="Slezak T."/>
            <person name="Solovyev V."/>
            <person name="Thayer N."/>
            <person name="Tice H."/>
            <person name="Tsai M."/>
            <person name="Ustaszewska A."/>
            <person name="Vo N."/>
            <person name="Wagner M."/>
            <person name="Wheeler J."/>
            <person name="Wu K."/>
            <person name="Xie G."/>
            <person name="Yang J."/>
            <person name="Dubchak I."/>
            <person name="Furey T.S."/>
            <person name="DeJong P."/>
            <person name="Dickson M."/>
            <person name="Gordon D."/>
            <person name="Eichler E.E."/>
            <person name="Pennacchio L.A."/>
            <person name="Richardson P."/>
            <person name="Stubbs L."/>
            <person name="Rokhsar D.S."/>
            <person name="Myers R.M."/>
            <person name="Rubin E.M."/>
            <person name="Lucas S.M."/>
        </authorList>
    </citation>
    <scope>NUCLEOTIDE SEQUENCE [LARGE SCALE GENOMIC DNA]</scope>
</reference>
<reference key="5">
    <citation type="journal article" date="2004" name="Genome Res.">
        <title>The status, quality, and expansion of the NIH full-length cDNA project: the Mammalian Gene Collection (MGC).</title>
        <authorList>
            <consortium name="The MGC Project Team"/>
        </authorList>
    </citation>
    <scope>NUCLEOTIDE SEQUENCE [LARGE SCALE MRNA] (ISOFORM 2)</scope>
    <source>
        <tissue>Testis</tissue>
    </source>
</reference>
<proteinExistence type="evidence at protein level"/>
<sequence length="481" mass="54782">MAAGWLTTWSQNSVTFQEVAVDFSQEEWALLDPAQKNLYKDVMLENFRNLASVGYQLCRHSLISKVDQEQLKTDERGILQGDCADWETQLKPKDTIAMQNIPGGKTSNGINTAENQPGEHSLECNHCGKFRKNTRFICTRYCKGEKCYKYIKYSKVFNHPSTLRSHVSIHIGEKTLEFTDCRKAFNQESSLRKHLRTPTGQKFQEYEQCDMSFSLHSSCSVREQIPTGEKGDECSDYGKISPLSVHTKTGSVEEGLECNEHEKTFTDPLSLQNCVRTHSGEMPYECSDCGKAFIFQSSLKKHMRSHTGEKPYECDHCGKSFSQSSHLNVHKRTHTGEKPYDCKECGKAFTVPSSLQKHVRTHTGEKPYECSDCGKAFIDQSSLKKHTRSHTGEKPYECNQCGKSFSTGSYLIVHKRTHTGEKTYECKECGKAFRNSSCLRVHVRTHTGEKPYKCIQCEKAFSTSTNLIMHKRIHNGQKLHE</sequence>
<keyword id="KW-0025">Alternative splicing</keyword>
<keyword id="KW-0238">DNA-binding</keyword>
<keyword id="KW-0479">Metal-binding</keyword>
<keyword id="KW-0539">Nucleus</keyword>
<keyword id="KW-1267">Proteomics identification</keyword>
<keyword id="KW-1185">Reference proteome</keyword>
<keyword id="KW-0677">Repeat</keyword>
<keyword id="KW-0804">Transcription</keyword>
<keyword id="KW-0805">Transcription regulation</keyword>
<keyword id="KW-0862">Zinc</keyword>
<keyword id="KW-0863">Zinc-finger</keyword>
<organism>
    <name type="scientific">Homo sapiens</name>
    <name type="common">Human</name>
    <dbReference type="NCBI Taxonomy" id="9606"/>
    <lineage>
        <taxon>Eukaryota</taxon>
        <taxon>Metazoa</taxon>
        <taxon>Chordata</taxon>
        <taxon>Craniata</taxon>
        <taxon>Vertebrata</taxon>
        <taxon>Euteleostomi</taxon>
        <taxon>Mammalia</taxon>
        <taxon>Eutheria</taxon>
        <taxon>Euarchontoglires</taxon>
        <taxon>Primates</taxon>
        <taxon>Haplorrhini</taxon>
        <taxon>Catarrhini</taxon>
        <taxon>Hominidae</taxon>
        <taxon>Homo</taxon>
    </lineage>
</organism>
<dbReference type="EMBL" id="U37263">
    <property type="protein sequence ID" value="AAB09749.1"/>
    <property type="molecule type" value="mRNA"/>
</dbReference>
<dbReference type="EMBL" id="U37251">
    <property type="status" value="NOT_ANNOTATED_CDS"/>
    <property type="molecule type" value="mRNA"/>
</dbReference>
<dbReference type="EMBL" id="AK302274">
    <property type="protein sequence ID" value="BAG63619.1"/>
    <property type="molecule type" value="mRNA"/>
</dbReference>
<dbReference type="EMBL" id="AC011451">
    <property type="status" value="NOT_ANNOTATED_CDS"/>
    <property type="molecule type" value="Genomic_DNA"/>
</dbReference>
<dbReference type="EMBL" id="BC012012">
    <property type="protein sequence ID" value="AAH12012.1"/>
    <property type="molecule type" value="mRNA"/>
</dbReference>
<dbReference type="CCDS" id="CCDS54214.1">
    <molecule id="Q13360-1"/>
</dbReference>
<dbReference type="RefSeq" id="NP_001166121.1">
    <molecule id="Q13360-2"/>
    <property type="nucleotide sequence ID" value="NM_001172650.2"/>
</dbReference>
<dbReference type="RefSeq" id="NP_001166122.1">
    <molecule id="Q13360-1"/>
    <property type="nucleotide sequence ID" value="NM_001172651.2"/>
</dbReference>
<dbReference type="RefSeq" id="NP_001189354.1">
    <molecule id="Q13360-3"/>
    <property type="nucleotide sequence ID" value="NM_001202425.1"/>
</dbReference>
<dbReference type="RefSeq" id="NP_001371587.1">
    <molecule id="Q13360-2"/>
    <property type="nucleotide sequence ID" value="NM_001384658.1"/>
</dbReference>
<dbReference type="RefSeq" id="NP_003442.2">
    <molecule id="Q13360-2"/>
    <property type="nucleotide sequence ID" value="NM_003451.3"/>
</dbReference>
<dbReference type="SMR" id="Q13360"/>
<dbReference type="BioGRID" id="113519">
    <property type="interactions" value="24"/>
</dbReference>
<dbReference type="BioGRID" id="1529384">
    <property type="interactions" value="17"/>
</dbReference>
<dbReference type="FunCoup" id="Q13360">
    <property type="interactions" value="40"/>
</dbReference>
<dbReference type="IntAct" id="Q13360">
    <property type="interactions" value="21"/>
</dbReference>
<dbReference type="MINT" id="Q13360"/>
<dbReference type="STRING" id="9606.ENSP00000415070"/>
<dbReference type="iPTMnet" id="Q13360"/>
<dbReference type="PhosphoSitePlus" id="Q13360"/>
<dbReference type="BioMuta" id="ZNF177"/>
<dbReference type="DMDM" id="425906076"/>
<dbReference type="jPOST" id="Q13360"/>
<dbReference type="MassIVE" id="Q13360"/>
<dbReference type="PaxDb" id="9606-ENSP00000415070"/>
<dbReference type="PeptideAtlas" id="Q13360"/>
<dbReference type="ProteomicsDB" id="46361"/>
<dbReference type="ProteomicsDB" id="59343">
    <molecule id="Q13360-1"/>
</dbReference>
<dbReference type="Antibodypedia" id="828">
    <property type="antibodies" value="74 antibodies from 17 providers"/>
</dbReference>
<dbReference type="DNASU" id="7730"/>
<dbReference type="Ensembl" id="ENST00000343499.8">
    <molecule id="Q13360-2"/>
    <property type="protein sequence ID" value="ENSP00000341497.3"/>
    <property type="gene ID" value="ENSG00000188629.14"/>
</dbReference>
<dbReference type="Ensembl" id="ENST00000589262.5">
    <molecule id="Q13360-1"/>
    <property type="protein sequence ID" value="ENSP00000468531.1"/>
    <property type="gene ID" value="ENSG00000188629.14"/>
</dbReference>
<dbReference type="Ensembl" id="ENST00000683217.1">
    <molecule id="Q13360-1"/>
    <property type="protein sequence ID" value="ENSP00000507083.1"/>
    <property type="gene ID" value="ENSG00000188629.14"/>
</dbReference>
<dbReference type="GeneID" id="7730"/>
<dbReference type="KEGG" id="hsa:100529215"/>
<dbReference type="KEGG" id="hsa:7730"/>
<dbReference type="MANE-Select" id="ENST00000683217.1">
    <property type="protein sequence ID" value="ENSP00000507083.1"/>
    <property type="RefSeq nucleotide sequence ID" value="NM_001172651.2"/>
    <property type="RefSeq protein sequence ID" value="NP_001166122.1"/>
</dbReference>
<dbReference type="UCSC" id="uc002mlk.4">
    <molecule id="Q13360-1"/>
    <property type="organism name" value="human"/>
</dbReference>
<dbReference type="AGR" id="HGNC:12966"/>
<dbReference type="AGR" id="HGNC:42964"/>
<dbReference type="CTD" id="100529215"/>
<dbReference type="CTD" id="7730"/>
<dbReference type="DisGeNET" id="100529215"/>
<dbReference type="DisGeNET" id="7730"/>
<dbReference type="GeneCards" id="ZNF177"/>
<dbReference type="HGNC" id="HGNC:12966">
    <property type="gene designation" value="ZNF177"/>
</dbReference>
<dbReference type="HPA" id="ENSG00000188629">
    <property type="expression patterns" value="Low tissue specificity"/>
</dbReference>
<dbReference type="MIM" id="601276">
    <property type="type" value="gene"/>
</dbReference>
<dbReference type="neXtProt" id="NX_Q13360"/>
<dbReference type="OpenTargets" id="ENSG00000188629"/>
<dbReference type="OpenTargets" id="ENSG00000270011"/>
<dbReference type="PharmGKB" id="PA37548"/>
<dbReference type="VEuPathDB" id="HostDB:ENSG00000188629"/>
<dbReference type="eggNOG" id="KOG1721">
    <property type="taxonomic scope" value="Eukaryota"/>
</dbReference>
<dbReference type="GeneTree" id="ENSGT00940000163463"/>
<dbReference type="HOGENOM" id="CLU_002678_0_7_1"/>
<dbReference type="InParanoid" id="Q13360"/>
<dbReference type="OMA" id="HEYDQCD"/>
<dbReference type="OrthoDB" id="6077919at2759"/>
<dbReference type="PAN-GO" id="Q13360">
    <property type="GO annotations" value="3 GO annotations based on evolutionary models"/>
</dbReference>
<dbReference type="PhylomeDB" id="Q13360"/>
<dbReference type="PathwayCommons" id="Q13360"/>
<dbReference type="SignaLink" id="Q13360"/>
<dbReference type="BioGRID-ORCS" id="100529215">
    <property type="hits" value="15 hits in 1016 CRISPR screens"/>
</dbReference>
<dbReference type="BioGRID-ORCS" id="7730">
    <property type="hits" value="7 hits in 1143 CRISPR screens"/>
</dbReference>
<dbReference type="Pharos" id="Q13360">
    <property type="development level" value="Tbio"/>
</dbReference>
<dbReference type="PRO" id="PR:Q13360"/>
<dbReference type="Proteomes" id="UP000005640">
    <property type="component" value="Chromosome 19"/>
</dbReference>
<dbReference type="RNAct" id="Q13360">
    <property type="molecule type" value="protein"/>
</dbReference>
<dbReference type="Bgee" id="ENSG00000188629">
    <property type="expression patterns" value="Expressed in primordial germ cell in gonad and 99 other cell types or tissues"/>
</dbReference>
<dbReference type="ExpressionAtlas" id="Q13360">
    <property type="expression patterns" value="baseline and differential"/>
</dbReference>
<dbReference type="GO" id="GO:0072562">
    <property type="term" value="C:blood microparticle"/>
    <property type="evidence" value="ECO:0007005"/>
    <property type="project" value="UniProtKB"/>
</dbReference>
<dbReference type="GO" id="GO:0005634">
    <property type="term" value="C:nucleus"/>
    <property type="evidence" value="ECO:0000318"/>
    <property type="project" value="GO_Central"/>
</dbReference>
<dbReference type="GO" id="GO:0000981">
    <property type="term" value="F:DNA-binding transcription factor activity, RNA polymerase II-specific"/>
    <property type="evidence" value="ECO:0000318"/>
    <property type="project" value="GO_Central"/>
</dbReference>
<dbReference type="GO" id="GO:0000977">
    <property type="term" value="F:RNA polymerase II transcription regulatory region sequence-specific DNA binding"/>
    <property type="evidence" value="ECO:0000318"/>
    <property type="project" value="GO_Central"/>
</dbReference>
<dbReference type="GO" id="GO:1990837">
    <property type="term" value="F:sequence-specific double-stranded DNA binding"/>
    <property type="evidence" value="ECO:0000314"/>
    <property type="project" value="ARUK-UCL"/>
</dbReference>
<dbReference type="GO" id="GO:0008270">
    <property type="term" value="F:zinc ion binding"/>
    <property type="evidence" value="ECO:0007669"/>
    <property type="project" value="UniProtKB-KW"/>
</dbReference>
<dbReference type="GO" id="GO:0000122">
    <property type="term" value="P:negative regulation of transcription by RNA polymerase II"/>
    <property type="evidence" value="ECO:0000304"/>
    <property type="project" value="ProtInc"/>
</dbReference>
<dbReference type="GO" id="GO:0006357">
    <property type="term" value="P:regulation of transcription by RNA polymerase II"/>
    <property type="evidence" value="ECO:0000318"/>
    <property type="project" value="GO_Central"/>
</dbReference>
<dbReference type="CDD" id="cd07765">
    <property type="entry name" value="KRAB_A-box"/>
    <property type="match status" value="1"/>
</dbReference>
<dbReference type="FunFam" id="3.30.160.60:FF:002971">
    <property type="entry name" value="Zinc finger protein"/>
    <property type="match status" value="1"/>
</dbReference>
<dbReference type="FunFam" id="3.30.160.60:FF:000555">
    <property type="entry name" value="Zinc finger protein 1 homolog"/>
    <property type="match status" value="1"/>
</dbReference>
<dbReference type="FunFam" id="3.30.160.60:FF:000650">
    <property type="entry name" value="Zinc finger protein 197"/>
    <property type="match status" value="1"/>
</dbReference>
<dbReference type="FunFam" id="3.30.160.60:FF:001530">
    <property type="entry name" value="Zinc finger protein 268"/>
    <property type="match status" value="1"/>
</dbReference>
<dbReference type="FunFam" id="3.30.160.60:FF:001498">
    <property type="entry name" value="Zinc finger protein 404"/>
    <property type="match status" value="1"/>
</dbReference>
<dbReference type="FunFam" id="3.30.160.60:FF:002254">
    <property type="entry name" value="Zinc finger protein 540"/>
    <property type="match status" value="2"/>
</dbReference>
<dbReference type="FunFam" id="3.30.160.60:FF:003916">
    <property type="entry name" value="ZNF177 isoform 3"/>
    <property type="match status" value="1"/>
</dbReference>
<dbReference type="Gene3D" id="6.10.140.140">
    <property type="match status" value="1"/>
</dbReference>
<dbReference type="Gene3D" id="3.30.160.60">
    <property type="entry name" value="Classic Zinc Finger"/>
    <property type="match status" value="8"/>
</dbReference>
<dbReference type="InterPro" id="IPR050752">
    <property type="entry name" value="C2H2-ZF_domain"/>
</dbReference>
<dbReference type="InterPro" id="IPR001909">
    <property type="entry name" value="KRAB"/>
</dbReference>
<dbReference type="InterPro" id="IPR036051">
    <property type="entry name" value="KRAB_dom_sf"/>
</dbReference>
<dbReference type="InterPro" id="IPR036236">
    <property type="entry name" value="Znf_C2H2_sf"/>
</dbReference>
<dbReference type="InterPro" id="IPR013087">
    <property type="entry name" value="Znf_C2H2_type"/>
</dbReference>
<dbReference type="PANTHER" id="PTHR24384">
    <property type="entry name" value="FINGER PUTATIVE TRANSCRIPTION FACTOR FAMILY-RELATED"/>
    <property type="match status" value="1"/>
</dbReference>
<dbReference type="PANTHER" id="PTHR24384:SF246">
    <property type="entry name" value="GENE, 19965-RELATED"/>
    <property type="match status" value="1"/>
</dbReference>
<dbReference type="Pfam" id="PF01352">
    <property type="entry name" value="KRAB"/>
    <property type="match status" value="1"/>
</dbReference>
<dbReference type="Pfam" id="PF00096">
    <property type="entry name" value="zf-C2H2"/>
    <property type="match status" value="4"/>
</dbReference>
<dbReference type="Pfam" id="PF13912">
    <property type="entry name" value="zf-C2H2_6"/>
    <property type="match status" value="1"/>
</dbReference>
<dbReference type="Pfam" id="PF13465">
    <property type="entry name" value="zf-H2C2_2"/>
    <property type="match status" value="1"/>
</dbReference>
<dbReference type="SMART" id="SM00349">
    <property type="entry name" value="KRAB"/>
    <property type="match status" value="1"/>
</dbReference>
<dbReference type="SMART" id="SM00355">
    <property type="entry name" value="ZnF_C2H2"/>
    <property type="match status" value="8"/>
</dbReference>
<dbReference type="SUPFAM" id="SSF57667">
    <property type="entry name" value="beta-beta-alpha zinc fingers"/>
    <property type="match status" value="6"/>
</dbReference>
<dbReference type="SUPFAM" id="SSF109640">
    <property type="entry name" value="KRAB domain (Kruppel-associated box)"/>
    <property type="match status" value="1"/>
</dbReference>
<dbReference type="PROSITE" id="PS50805">
    <property type="entry name" value="KRAB"/>
    <property type="match status" value="1"/>
</dbReference>
<dbReference type="PROSITE" id="PS00028">
    <property type="entry name" value="ZINC_FINGER_C2H2_1"/>
    <property type="match status" value="7"/>
</dbReference>
<dbReference type="PROSITE" id="PS50157">
    <property type="entry name" value="ZINC_FINGER_C2H2_2"/>
    <property type="match status" value="10"/>
</dbReference>
<evidence type="ECO:0000255" key="1">
    <source>
        <dbReference type="PROSITE-ProRule" id="PRU00042"/>
    </source>
</evidence>
<evidence type="ECO:0000255" key="2">
    <source>
        <dbReference type="PROSITE-ProRule" id="PRU00119"/>
    </source>
</evidence>
<evidence type="ECO:0000269" key="3">
    <source>
    </source>
</evidence>
<evidence type="ECO:0000269" key="4">
    <source>
    </source>
</evidence>
<evidence type="ECO:0000269" key="5">
    <source>
    </source>
</evidence>
<evidence type="ECO:0000303" key="6">
    <source>
    </source>
</evidence>
<evidence type="ECO:0000303" key="7">
    <source>
    </source>
</evidence>
<evidence type="ECO:0000303" key="8">
    <source>
    </source>
</evidence>
<evidence type="ECO:0000305" key="9"/>
<gene>
    <name type="primary">ZNF177</name>
</gene>
<comment type="function">
    <text>May be involved in transcriptional regulation.</text>
</comment>
<comment type="interaction">
    <interactant intactId="EBI-3921570">
        <id>Q13360</id>
    </interactant>
    <interactant intactId="EBI-10178656">
        <id>J3JSM9</id>
        <label>ARHGAP21</label>
    </interactant>
    <organismsDiffer>false</organismsDiffer>
    <experiments>3</experiments>
</comment>
<comment type="interaction">
    <interactant intactId="EBI-12272076">
        <id>Q13360-2</id>
    </interactant>
    <interactant intactId="EBI-12006120">
        <id>A0A087WZT3</id>
        <label>BOLA2-SMG1P6</label>
    </interactant>
    <organismsDiffer>false</organismsDiffer>
    <experiments>3</experiments>
</comment>
<comment type="interaction">
    <interactant intactId="EBI-12272076">
        <id>Q13360-2</id>
    </interactant>
    <interactant intactId="EBI-10292696">
        <id>Q96Q77</id>
        <label>CIB3</label>
    </interactant>
    <organismsDiffer>false</organismsDiffer>
    <experiments>3</experiments>
</comment>
<comment type="interaction">
    <interactant intactId="EBI-12272076">
        <id>Q13360-2</id>
    </interactant>
    <interactant intactId="EBI-347804">
        <id>P68400</id>
        <label>CSNK2A1</label>
    </interactant>
    <organismsDiffer>false</organismsDiffer>
    <experiments>3</experiments>
</comment>
<comment type="interaction">
    <interactant intactId="EBI-12272076">
        <id>Q13360-2</id>
    </interactant>
    <interactant intactId="EBI-6873363">
        <id>Q8WUE5</id>
        <label>CT55</label>
    </interactant>
    <organismsDiffer>false</organismsDiffer>
    <experiments>3</experiments>
</comment>
<comment type="interaction">
    <interactant intactId="EBI-12272076">
        <id>Q13360-2</id>
    </interactant>
    <interactant intactId="EBI-742102">
        <id>Q8IYI6</id>
        <label>EXOC8</label>
    </interactant>
    <organismsDiffer>false</organismsDiffer>
    <experiments>3</experiments>
</comment>
<comment type="interaction">
    <interactant intactId="EBI-12272076">
        <id>Q13360-2</id>
    </interactant>
    <interactant intactId="EBI-8639312">
        <id>P25800</id>
        <label>LMO1</label>
    </interactant>
    <organismsDiffer>false</organismsDiffer>
    <experiments>3</experiments>
</comment>
<comment type="interaction">
    <interactant intactId="EBI-12272076">
        <id>Q13360-2</id>
    </interactant>
    <interactant intactId="EBI-10172526">
        <id>Q9UJV3-2</id>
        <label>MID2</label>
    </interactant>
    <organismsDiffer>false</organismsDiffer>
    <experiments>3</experiments>
</comment>
<comment type="interaction">
    <interactant intactId="EBI-12272076">
        <id>Q13360-2</id>
    </interactant>
    <interactant intactId="EBI-744248">
        <id>P40692</id>
        <label>MLH1</label>
    </interactant>
    <organismsDiffer>false</organismsDiffer>
    <experiments>3</experiments>
</comment>
<comment type="interaction">
    <interactant intactId="EBI-12272076">
        <id>Q13360-2</id>
    </interactant>
    <interactant intactId="EBI-1055562">
        <id>Q15126</id>
        <label>PMVK</label>
    </interactant>
    <organismsDiffer>false</organismsDiffer>
    <experiments>3</experiments>
</comment>
<comment type="interaction">
    <interactant intactId="EBI-12272076">
        <id>Q13360-2</id>
    </interactant>
    <interactant intactId="EBI-1053424">
        <id>O43741</id>
        <label>PRKAB2</label>
    </interactant>
    <organismsDiffer>false</organismsDiffer>
    <experiments>3</experiments>
</comment>
<comment type="interaction">
    <interactant intactId="EBI-12272076">
        <id>Q13360-2</id>
    </interactant>
    <interactant intactId="EBI-2805516">
        <id>P31321</id>
        <label>PRKAR1B</label>
    </interactant>
    <organismsDiffer>false</organismsDiffer>
    <experiments>3</experiments>
</comment>
<comment type="interaction">
    <interactant intactId="EBI-12272076">
        <id>Q13360-2</id>
    </interactant>
    <interactant intactId="EBI-372273">
        <id>P20618</id>
        <label>PSMB1</label>
    </interactant>
    <organismsDiffer>false</organismsDiffer>
    <experiments>3</experiments>
</comment>
<comment type="interaction">
    <interactant intactId="EBI-12272076">
        <id>Q13360-2</id>
    </interactant>
    <interactant intactId="EBI-12177361">
        <id>P60880-2</id>
        <label>SNAP25</label>
    </interactant>
    <organismsDiffer>false</organismsDiffer>
    <experiments>3</experiments>
</comment>
<comment type="interaction">
    <interactant intactId="EBI-12272076">
        <id>Q13360-2</id>
    </interactant>
    <interactant intactId="EBI-12004298">
        <id>O75971-2</id>
        <label>SNAPC5</label>
    </interactant>
    <organismsDiffer>false</organismsDiffer>
    <experiments>3</experiments>
</comment>
<comment type="interaction">
    <interactant intactId="EBI-12272076">
        <id>Q13360-2</id>
    </interactant>
    <interactant intactId="EBI-3650647">
        <id>Q9BUZ4</id>
        <label>TRAF4</label>
    </interactant>
    <organismsDiffer>false</organismsDiffer>
    <experiments>3</experiments>
</comment>
<comment type="interaction">
    <interactant intactId="EBI-12272076">
        <id>Q13360-2</id>
    </interactant>
    <interactant intactId="EBI-10183064">
        <id>Q8N5A5-2</id>
        <label>ZGPAT</label>
    </interactant>
    <organismsDiffer>false</organismsDiffer>
    <experiments>3</experiments>
</comment>
<comment type="subcellular location">
    <subcellularLocation>
        <location evidence="9">Nucleus</location>
    </subcellularLocation>
</comment>
<comment type="alternative products">
    <event type="alternative splicing"/>
    <isoform>
        <id>Q13360-1</id>
        <name>1</name>
        <sequence type="displayed"/>
    </isoform>
    <isoform>
        <id>Q13360-2</id>
        <name>2</name>
        <sequence type="described" ref="VSP_044461"/>
    </isoform>
    <isoform>
        <id>Q13360-3</id>
        <name>3</name>
        <sequence type="described" ref="VSP_045841 VSP_045842"/>
    </isoform>
</comment>
<comment type="similarity">
    <text evidence="9">Belongs to the krueppel C2H2-type zinc-finger protein family.</text>
</comment>
<accession>Q13360</accession>
<accession>B4DY57</accession>
<accession>E9PDG0</accession>
<accession>I3L0I4</accession>
<accession>Q96ER2</accession>
<name>ZN177_HUMAN</name>
<protein>
    <recommendedName>
        <fullName>Zinc finger protein 177</fullName>
    </recommendedName>
</protein>
<feature type="chain" id="PRO_0000047441" description="Zinc finger protein 177">
    <location>
        <begin position="1"/>
        <end position="481"/>
    </location>
</feature>
<feature type="domain" description="KRAB" evidence="2">
    <location>
        <begin position="14"/>
        <end position="84"/>
    </location>
</feature>
<feature type="zinc finger region" description="C2H2-type 1; degenerate" evidence="1">
    <location>
        <begin position="145"/>
        <end position="170"/>
    </location>
</feature>
<feature type="zinc finger region" description="C2H2-type 2; degenerate" evidence="1">
    <location>
        <begin position="176"/>
        <end position="198"/>
    </location>
</feature>
<feature type="zinc finger region" description="C2H2-type 3; atypical" evidence="1">
    <location>
        <begin position="256"/>
        <end position="278"/>
    </location>
</feature>
<feature type="zinc finger region" description="C2H2-type 4" evidence="1">
    <location>
        <begin position="284"/>
        <end position="306"/>
    </location>
</feature>
<feature type="zinc finger region" description="C2H2-type 5" evidence="1">
    <location>
        <begin position="312"/>
        <end position="334"/>
    </location>
</feature>
<feature type="zinc finger region" description="C2H2-type 6" evidence="1">
    <location>
        <begin position="340"/>
        <end position="362"/>
    </location>
</feature>
<feature type="zinc finger region" description="C2H2-type 7" evidence="1">
    <location>
        <begin position="368"/>
        <end position="390"/>
    </location>
</feature>
<feature type="zinc finger region" description="C2H2-type 8" evidence="1">
    <location>
        <begin position="396"/>
        <end position="418"/>
    </location>
</feature>
<feature type="zinc finger region" description="C2H2-type 9" evidence="1">
    <location>
        <begin position="424"/>
        <end position="446"/>
    </location>
</feature>
<feature type="zinc finger region" description="C2H2-type 10" evidence="1">
    <location>
        <begin position="452"/>
        <end position="474"/>
    </location>
</feature>
<feature type="splice variant" id="VSP_044461" description="In isoform 2." evidence="7 8">
    <location>
        <begin position="113"/>
        <end position="272"/>
    </location>
</feature>
<feature type="splice variant" id="VSP_045841" description="In isoform 3." evidence="6">
    <original>AENQPGEH</original>
    <variation>NPHGREFL</variation>
    <location>
        <begin position="113"/>
        <end position="120"/>
    </location>
</feature>
<feature type="splice variant" id="VSP_045842" description="In isoform 3." evidence="6">
    <location>
        <begin position="121"/>
        <end position="481"/>
    </location>
</feature>
<feature type="sequence variant" id="VAR_031692" description="In dbSNP:rs2230750.">
    <original>D</original>
    <variation>G</variation>
    <location>
        <position position="94"/>
    </location>
</feature>
<feature type="sequence variant" id="VAR_031693" description="In dbSNP:rs2217652." evidence="3 4 5">
    <original>T</original>
    <variation>M</variation>
    <location>
        <position position="112"/>
    </location>
</feature>
<feature type="sequence variant" id="VAR_057401" description="In dbSNP:rs2230752." evidence="4 5">
    <original>I</original>
    <variation>F</variation>
    <location>
        <position position="455"/>
    </location>
</feature>
<feature type="sequence conflict" description="In Ref. 2; U37251." evidence="9" ref="2">
    <original>A</original>
    <variation>G</variation>
    <location>
        <position position="29"/>
    </location>
</feature>
<feature type="sequence conflict" description="In Ref. 5; AAH12012." evidence="9" ref="5">
    <original>H</original>
    <variation>P</variation>
    <location>
        <position position="470"/>
    </location>
</feature>